<feature type="chain" id="PRO_1000184633" description="ATP synthase subunit delta">
    <location>
        <begin position="1"/>
        <end position="179"/>
    </location>
</feature>
<protein>
    <recommendedName>
        <fullName evidence="1">ATP synthase subunit delta</fullName>
    </recommendedName>
    <alternativeName>
        <fullName evidence="1">ATP synthase F(1) sector subunit delta</fullName>
    </alternativeName>
    <alternativeName>
        <fullName evidence="1">F-type ATPase subunit delta</fullName>
        <shortName evidence="1">F-ATPase subunit delta</shortName>
    </alternativeName>
</protein>
<name>ATPD_ACIF2</name>
<dbReference type="EMBL" id="CP001219">
    <property type="protein sequence ID" value="ACK80929.1"/>
    <property type="molecule type" value="Genomic_DNA"/>
</dbReference>
<dbReference type="RefSeq" id="WP_009561112.1">
    <property type="nucleotide sequence ID" value="NC_011761.1"/>
</dbReference>
<dbReference type="SMR" id="B7JB87"/>
<dbReference type="STRING" id="243159.AFE_3206"/>
<dbReference type="PaxDb" id="243159-AFE_3206"/>
<dbReference type="GeneID" id="65282190"/>
<dbReference type="KEGG" id="afr:AFE_3206"/>
<dbReference type="eggNOG" id="COG0712">
    <property type="taxonomic scope" value="Bacteria"/>
</dbReference>
<dbReference type="HOGENOM" id="CLU_085114_3_0_6"/>
<dbReference type="Proteomes" id="UP000001362">
    <property type="component" value="Chromosome"/>
</dbReference>
<dbReference type="GO" id="GO:0005886">
    <property type="term" value="C:plasma membrane"/>
    <property type="evidence" value="ECO:0007669"/>
    <property type="project" value="UniProtKB-SubCell"/>
</dbReference>
<dbReference type="GO" id="GO:0045259">
    <property type="term" value="C:proton-transporting ATP synthase complex"/>
    <property type="evidence" value="ECO:0007669"/>
    <property type="project" value="UniProtKB-KW"/>
</dbReference>
<dbReference type="GO" id="GO:0046933">
    <property type="term" value="F:proton-transporting ATP synthase activity, rotational mechanism"/>
    <property type="evidence" value="ECO:0007669"/>
    <property type="project" value="UniProtKB-UniRule"/>
</dbReference>
<dbReference type="Gene3D" id="1.10.520.20">
    <property type="entry name" value="N-terminal domain of the delta subunit of the F1F0-ATP synthase"/>
    <property type="match status" value="1"/>
</dbReference>
<dbReference type="HAMAP" id="MF_01416">
    <property type="entry name" value="ATP_synth_delta_bact"/>
    <property type="match status" value="1"/>
</dbReference>
<dbReference type="InterPro" id="IPR026015">
    <property type="entry name" value="ATP_synth_OSCP/delta_N_sf"/>
</dbReference>
<dbReference type="InterPro" id="IPR020781">
    <property type="entry name" value="ATPase_OSCP/d_CS"/>
</dbReference>
<dbReference type="InterPro" id="IPR000711">
    <property type="entry name" value="ATPase_OSCP/dsu"/>
</dbReference>
<dbReference type="NCBIfam" id="TIGR01145">
    <property type="entry name" value="ATP_synt_delta"/>
    <property type="match status" value="1"/>
</dbReference>
<dbReference type="NCBIfam" id="NF004402">
    <property type="entry name" value="PRK05758.2-2"/>
    <property type="match status" value="1"/>
</dbReference>
<dbReference type="PANTHER" id="PTHR11910">
    <property type="entry name" value="ATP SYNTHASE DELTA CHAIN"/>
    <property type="match status" value="1"/>
</dbReference>
<dbReference type="Pfam" id="PF00213">
    <property type="entry name" value="OSCP"/>
    <property type="match status" value="1"/>
</dbReference>
<dbReference type="PRINTS" id="PR00125">
    <property type="entry name" value="ATPASEDELTA"/>
</dbReference>
<dbReference type="SUPFAM" id="SSF47928">
    <property type="entry name" value="N-terminal domain of the delta subunit of the F1F0-ATP synthase"/>
    <property type="match status" value="1"/>
</dbReference>
<dbReference type="PROSITE" id="PS00389">
    <property type="entry name" value="ATPASE_DELTA"/>
    <property type="match status" value="1"/>
</dbReference>
<gene>
    <name evidence="1" type="primary">atpH</name>
    <name type="ordered locus">AFE_3206</name>
</gene>
<reference key="1">
    <citation type="journal article" date="2008" name="BMC Genomics">
        <title>Acidithiobacillus ferrooxidans metabolism: from genome sequence to industrial applications.</title>
        <authorList>
            <person name="Valdes J."/>
            <person name="Pedroso I."/>
            <person name="Quatrini R."/>
            <person name="Dodson R.J."/>
            <person name="Tettelin H."/>
            <person name="Blake R. II"/>
            <person name="Eisen J.A."/>
            <person name="Holmes D.S."/>
        </authorList>
    </citation>
    <scope>NUCLEOTIDE SEQUENCE [LARGE SCALE GENOMIC DNA]</scope>
    <source>
        <strain>ATCC 23270 / DSM 14882 / CIP 104768 / NCIMB 8455</strain>
    </source>
</reference>
<accession>B7JB87</accession>
<keyword id="KW-0066">ATP synthesis</keyword>
<keyword id="KW-0997">Cell inner membrane</keyword>
<keyword id="KW-1003">Cell membrane</keyword>
<keyword id="KW-0139">CF(1)</keyword>
<keyword id="KW-0375">Hydrogen ion transport</keyword>
<keyword id="KW-0406">Ion transport</keyword>
<keyword id="KW-0472">Membrane</keyword>
<keyword id="KW-1185">Reference proteome</keyword>
<keyword id="KW-0813">Transport</keyword>
<organism>
    <name type="scientific">Acidithiobacillus ferrooxidans (strain ATCC 23270 / DSM 14882 / CIP 104768 / NCIMB 8455)</name>
    <name type="common">Ferrobacillus ferrooxidans (strain ATCC 23270)</name>
    <dbReference type="NCBI Taxonomy" id="243159"/>
    <lineage>
        <taxon>Bacteria</taxon>
        <taxon>Pseudomonadati</taxon>
        <taxon>Pseudomonadota</taxon>
        <taxon>Acidithiobacillia</taxon>
        <taxon>Acidithiobacillales</taxon>
        <taxon>Acidithiobacillaceae</taxon>
        <taxon>Acidithiobacillus</taxon>
    </lineage>
</organism>
<evidence type="ECO:0000255" key="1">
    <source>
        <dbReference type="HAMAP-Rule" id="MF_01416"/>
    </source>
</evidence>
<sequence length="179" mass="19018">MADLITVARPYAEALYGLAKESGQEQAWADALQALAAMIADVQAQAFLTDPERADAEKVSLLSAVPVAVDVKAWKAFLALLIHNDRWPATAEIGTLFADAMRRAEGVVDVLVTSAIALDAGQKTAVQSALERRFAGHKVAFREAVDAALIGGLVIHTGDLTIDASVRGQVQQLARTLRS</sequence>
<proteinExistence type="inferred from homology"/>
<comment type="function">
    <text evidence="1">F(1)F(0) ATP synthase produces ATP from ADP in the presence of a proton or sodium gradient. F-type ATPases consist of two structural domains, F(1) containing the extramembraneous catalytic core and F(0) containing the membrane proton channel, linked together by a central stalk and a peripheral stalk. During catalysis, ATP synthesis in the catalytic domain of F(1) is coupled via a rotary mechanism of the central stalk subunits to proton translocation.</text>
</comment>
<comment type="function">
    <text evidence="1">This protein is part of the stalk that links CF(0) to CF(1). It either transmits conformational changes from CF(0) to CF(1) or is implicated in proton conduction.</text>
</comment>
<comment type="subunit">
    <text evidence="1">F-type ATPases have 2 components, F(1) - the catalytic core - and F(0) - the membrane proton channel. F(1) has five subunits: alpha(3), beta(3), gamma(1), delta(1), epsilon(1). F(0) has three main subunits: a(1), b(2) and c(10-14). The alpha and beta chains form an alternating ring which encloses part of the gamma chain. F(1) is attached to F(0) by a central stalk formed by the gamma and epsilon chains, while a peripheral stalk is formed by the delta and b chains.</text>
</comment>
<comment type="subcellular location">
    <subcellularLocation>
        <location evidence="1">Cell inner membrane</location>
        <topology evidence="1">Peripheral membrane protein</topology>
    </subcellularLocation>
</comment>
<comment type="similarity">
    <text evidence="1">Belongs to the ATPase delta chain family.</text>
</comment>